<feature type="chain" id="PRO_0000074329" description="Chromatin-remodeling ATPase INO80">
    <location>
        <begin position="1"/>
        <end position="1489"/>
    </location>
</feature>
<feature type="domain" description="DBINO" evidence="4">
    <location>
        <begin position="476"/>
        <end position="601"/>
    </location>
</feature>
<feature type="domain" description="Helicase ATP-binding" evidence="2">
    <location>
        <begin position="718"/>
        <end position="890"/>
    </location>
</feature>
<feature type="domain" description="Helicase C-terminal" evidence="3">
    <location>
        <begin position="1303"/>
        <end position="1467"/>
    </location>
</feature>
<feature type="region of interest" description="Disordered" evidence="5">
    <location>
        <begin position="137"/>
        <end position="311"/>
    </location>
</feature>
<feature type="region of interest" description="Disordered" evidence="5">
    <location>
        <begin position="393"/>
        <end position="452"/>
    </location>
</feature>
<feature type="region of interest" description="Disordered" evidence="5">
    <location>
        <begin position="1456"/>
        <end position="1489"/>
    </location>
</feature>
<feature type="short sequence motif" description="DEAQ box">
    <location>
        <begin position="841"/>
        <end position="844"/>
    </location>
</feature>
<feature type="compositionally biased region" description="Acidic residues" evidence="5">
    <location>
        <begin position="140"/>
        <end position="164"/>
    </location>
</feature>
<feature type="compositionally biased region" description="Acidic residues" evidence="5">
    <location>
        <begin position="214"/>
        <end position="291"/>
    </location>
</feature>
<feature type="compositionally biased region" description="Low complexity" evidence="5">
    <location>
        <begin position="301"/>
        <end position="311"/>
    </location>
</feature>
<feature type="compositionally biased region" description="Basic and acidic residues" evidence="5">
    <location>
        <begin position="393"/>
        <end position="402"/>
    </location>
</feature>
<feature type="binding site" evidence="2">
    <location>
        <begin position="731"/>
        <end position="738"/>
    </location>
    <ligand>
        <name>ATP</name>
        <dbReference type="ChEBI" id="CHEBI:30616"/>
    </ligand>
</feature>
<feature type="modified residue" description="Phosphoserine" evidence="14 15 16">
    <location>
        <position position="65"/>
    </location>
</feature>
<feature type="modified residue" description="Phosphoserine" evidence="15">
    <location>
        <position position="115"/>
    </location>
</feature>
<feature type="modified residue" description="Phosphoserine" evidence="15 16">
    <location>
        <position position="133"/>
    </location>
</feature>
<feature type="modified residue" description="Phosphoserine" evidence="16">
    <location>
        <position position="610"/>
    </location>
</feature>
<feature type="mutagenesis site" description="Reduced ATPase activity of the INO80 complex." evidence="7">
    <original>K</original>
    <variation>A</variation>
    <location>
        <position position="737"/>
    </location>
</feature>
<feature type="strand" evidence="17">
    <location>
        <begin position="453"/>
        <end position="455"/>
    </location>
</feature>
<feature type="helix" evidence="18">
    <location>
        <begin position="459"/>
        <end position="482"/>
    </location>
</feature>
<feature type="helix" evidence="18">
    <location>
        <begin position="484"/>
        <end position="517"/>
    </location>
</feature>
<feature type="helix" evidence="18">
    <location>
        <begin position="522"/>
        <end position="558"/>
    </location>
</feature>
<keyword id="KW-0002">3D-structure</keyword>
<keyword id="KW-0010">Activator</keyword>
<keyword id="KW-0067">ATP-binding</keyword>
<keyword id="KW-0903">Direct protein sequencing</keyword>
<keyword id="KW-0227">DNA damage</keyword>
<keyword id="KW-0234">DNA repair</keyword>
<keyword id="KW-0238">DNA-binding</keyword>
<keyword id="KW-0378">Hydrolase</keyword>
<keyword id="KW-0547">Nucleotide-binding</keyword>
<keyword id="KW-0539">Nucleus</keyword>
<keyword id="KW-0597">Phosphoprotein</keyword>
<keyword id="KW-1185">Reference proteome</keyword>
<keyword id="KW-0804">Transcription</keyword>
<keyword id="KW-0805">Transcription regulation</keyword>
<reference key="1">
    <citation type="journal article" date="1995" name="Yeast">
        <title>DNA sequence analysis of a 35 kb segment from Saccharomyces cerevisiae chromosome VII reveals 19 open reading frames including RAD54, ACE1/CUP2, PMR1, RCK1, AMS1 and CAL1/CDC43.</title>
        <authorList>
            <person name="James C.M."/>
            <person name="Indge K.J."/>
            <person name="Oliver S.G."/>
        </authorList>
    </citation>
    <scope>NUCLEOTIDE SEQUENCE [GENOMIC DNA]</scope>
</reference>
<reference key="2">
    <citation type="journal article" date="1997" name="Yeast">
        <title>The sequence of a nearly unclonable 22.8 kb segment on the left arm chromosome VII from Saccharomyces cerevisiae reveals ARO2, RPL9A, TIP1, MRF1 genes and six new open reading frames.</title>
        <authorList>
            <person name="Voet M."/>
            <person name="Defoor E."/>
            <person name="Verhasselt P."/>
            <person name="Riles L."/>
            <person name="Robben J."/>
            <person name="Volckaert G."/>
        </authorList>
    </citation>
    <scope>NUCLEOTIDE SEQUENCE [GENOMIC DNA]</scope>
    <source>
        <strain>ATCC 96604 / S288c / FY1679</strain>
    </source>
</reference>
<reference key="3">
    <citation type="journal article" date="1997" name="Nature">
        <title>The nucleotide sequence of Saccharomyces cerevisiae chromosome VII.</title>
        <authorList>
            <person name="Tettelin H."/>
            <person name="Agostoni-Carbone M.L."/>
            <person name="Albermann K."/>
            <person name="Albers M."/>
            <person name="Arroyo J."/>
            <person name="Backes U."/>
            <person name="Barreiros T."/>
            <person name="Bertani I."/>
            <person name="Bjourson A.J."/>
            <person name="Brueckner M."/>
            <person name="Bruschi C.V."/>
            <person name="Carignani G."/>
            <person name="Castagnoli L."/>
            <person name="Cerdan E."/>
            <person name="Clemente M.L."/>
            <person name="Coblenz A."/>
            <person name="Coglievina M."/>
            <person name="Coissac E."/>
            <person name="Defoor E."/>
            <person name="Del Bino S."/>
            <person name="Delius H."/>
            <person name="Delneri D."/>
            <person name="de Wergifosse P."/>
            <person name="Dujon B."/>
            <person name="Durand P."/>
            <person name="Entian K.-D."/>
            <person name="Eraso P."/>
            <person name="Escribano V."/>
            <person name="Fabiani L."/>
            <person name="Fartmann B."/>
            <person name="Feroli F."/>
            <person name="Feuermann M."/>
            <person name="Frontali L."/>
            <person name="Garcia-Gonzalez M."/>
            <person name="Garcia-Saez M.I."/>
            <person name="Goffeau A."/>
            <person name="Guerreiro P."/>
            <person name="Hani J."/>
            <person name="Hansen M."/>
            <person name="Hebling U."/>
            <person name="Hernandez K."/>
            <person name="Heumann K."/>
            <person name="Hilger F."/>
            <person name="Hofmann B."/>
            <person name="Indge K.J."/>
            <person name="James C.M."/>
            <person name="Klima R."/>
            <person name="Koetter P."/>
            <person name="Kramer B."/>
            <person name="Kramer W."/>
            <person name="Lauquin G."/>
            <person name="Leuther H."/>
            <person name="Louis E.J."/>
            <person name="Maillier E."/>
            <person name="Marconi A."/>
            <person name="Martegani E."/>
            <person name="Mazon M.J."/>
            <person name="Mazzoni C."/>
            <person name="McReynolds A.D.K."/>
            <person name="Melchioretto P."/>
            <person name="Mewes H.-W."/>
            <person name="Minenkova O."/>
            <person name="Mueller-Auer S."/>
            <person name="Nawrocki A."/>
            <person name="Netter P."/>
            <person name="Neu R."/>
            <person name="Nombela C."/>
            <person name="Oliver S.G."/>
            <person name="Panzeri L."/>
            <person name="Paoluzi S."/>
            <person name="Plevani P."/>
            <person name="Portetelle D."/>
            <person name="Portillo F."/>
            <person name="Potier S."/>
            <person name="Purnelle B."/>
            <person name="Rieger M."/>
            <person name="Riles L."/>
            <person name="Rinaldi T."/>
            <person name="Robben J."/>
            <person name="Rodrigues-Pousada C."/>
            <person name="Rodriguez-Belmonte E."/>
            <person name="Rodriguez-Torres A.M."/>
            <person name="Rose M."/>
            <person name="Ruzzi M."/>
            <person name="Saliola M."/>
            <person name="Sanchez-Perez M."/>
            <person name="Schaefer B."/>
            <person name="Schaefer M."/>
            <person name="Scharfe M."/>
            <person name="Schmidheini T."/>
            <person name="Schreer A."/>
            <person name="Skala J."/>
            <person name="Souciet J.-L."/>
            <person name="Steensma H.Y."/>
            <person name="Talla E."/>
            <person name="Thierry A."/>
            <person name="Vandenbol M."/>
            <person name="van der Aart Q.J.M."/>
            <person name="Van Dyck L."/>
            <person name="Vanoni M."/>
            <person name="Verhasselt P."/>
            <person name="Voet M."/>
            <person name="Volckaert G."/>
            <person name="Wambutt R."/>
            <person name="Watson M.D."/>
            <person name="Weber N."/>
            <person name="Wedler E."/>
            <person name="Wedler H."/>
            <person name="Wipfli P."/>
            <person name="Wolf K."/>
            <person name="Wright L.F."/>
            <person name="Zaccaria P."/>
            <person name="Zimmermann M."/>
            <person name="Zollner A."/>
            <person name="Kleine K."/>
        </authorList>
    </citation>
    <scope>NUCLEOTIDE SEQUENCE [LARGE SCALE GENOMIC DNA]</scope>
    <source>
        <strain>ATCC 204508 / S288c</strain>
    </source>
</reference>
<reference key="4">
    <citation type="journal article" date="2014" name="G3 (Bethesda)">
        <title>The reference genome sequence of Saccharomyces cerevisiae: Then and now.</title>
        <authorList>
            <person name="Engel S.R."/>
            <person name="Dietrich F.S."/>
            <person name="Fisk D.G."/>
            <person name="Binkley G."/>
            <person name="Balakrishnan R."/>
            <person name="Costanzo M.C."/>
            <person name="Dwight S.S."/>
            <person name="Hitz B.C."/>
            <person name="Karra K."/>
            <person name="Nash R.S."/>
            <person name="Weng S."/>
            <person name="Wong E.D."/>
            <person name="Lloyd P."/>
            <person name="Skrzypek M.S."/>
            <person name="Miyasato S.R."/>
            <person name="Simison M."/>
            <person name="Cherry J.M."/>
        </authorList>
    </citation>
    <scope>GENOME REANNOTATION</scope>
    <source>
        <strain>ATCC 204508 / S288c</strain>
    </source>
</reference>
<reference key="5">
    <citation type="journal article" date="2000" name="Nature">
        <title>A chromatin remodelling complex involved in transcription and DNA processing.</title>
        <authorList>
            <person name="Shen X."/>
            <person name="Mizuguchi G."/>
            <person name="Hamiche A."/>
            <person name="Wu C."/>
        </authorList>
    </citation>
    <scope>PARTIAL PROTEIN SEQUENCE</scope>
    <scope>FUNCTION</scope>
    <scope>CATALYTIC ACTIVITY</scope>
    <scope>IDENTIFICATION IN THE INO80 COMPLEX</scope>
    <scope>MUTAGENESIS OF LYS-737</scope>
</reference>
<reference key="6">
    <citation type="journal article" date="1999" name="Mol. Microbiol.">
        <title>The product of the SNF2/SWI2 paralogue INO80 of Saccharomyces cerevisiae required for efficient expression of various yeast structural genes is part of a high-molecular-weight protein complex.</title>
        <authorList>
            <person name="Ebbert R."/>
            <person name="Birkmann A."/>
            <person name="Schueller H.-J."/>
        </authorList>
    </citation>
    <scope>FUNCTION</scope>
    <scope>IDENTIFICATION IN A HIGH MOLECULAR WEIGHT COMPLEX</scope>
</reference>
<reference key="7">
    <citation type="journal article" date="1999" name="Yeast">
        <title>Systematic identification, classification, and characterization of the open reading frames which encode novel helicase-related proteins in Saccharomyces cerevisiae by gene disruption and Northern analysis.</title>
        <authorList>
            <person name="Shiratori A."/>
            <person name="Shibata T."/>
            <person name="Arisawa M."/>
            <person name="Hanaoka F."/>
            <person name="Murakami Y."/>
            <person name="Eki T."/>
        </authorList>
    </citation>
    <scope>IDENTIFICATION AS A PUTATIVE HELICASE</scope>
</reference>
<reference key="8">
    <citation type="journal article" date="2003" name="Mol. Cell">
        <title>Involvement of actin-related proteins in ATP-dependent chromatin remodeling.</title>
        <authorList>
            <person name="Shen X."/>
            <person name="Ranallo R."/>
            <person name="Choi E."/>
            <person name="Wu C."/>
        </authorList>
    </citation>
    <scope>FUNCTION OF THE INO80 COMPLEX</scope>
</reference>
<reference key="9">
    <citation type="journal article" date="2003" name="Nature">
        <title>Global analysis of protein localization in budding yeast.</title>
        <authorList>
            <person name="Huh W.-K."/>
            <person name="Falvo J.V."/>
            <person name="Gerke L.C."/>
            <person name="Carroll A.S."/>
            <person name="Howson R.W."/>
            <person name="Weissman J.S."/>
            <person name="O'Shea E.K."/>
        </authorList>
    </citation>
    <scope>SUBCELLULAR LOCATION [LARGE SCALE ANALYSIS]</scope>
</reference>
<reference key="10">
    <citation type="journal article" date="2003" name="Nature">
        <title>Global analysis of protein expression in yeast.</title>
        <authorList>
            <person name="Ghaemmaghami S."/>
            <person name="Huh W.-K."/>
            <person name="Bower K."/>
            <person name="Howson R.W."/>
            <person name="Belle A."/>
            <person name="Dephoure N."/>
            <person name="O'Shea E.K."/>
            <person name="Weissman J.S."/>
        </authorList>
    </citation>
    <scope>LEVEL OF PROTEIN EXPRESSION [LARGE SCALE ANALYSIS]</scope>
</reference>
<reference key="11">
    <citation type="journal article" date="2003" name="Science">
        <title>Regulation of chromatin remodeling by inositol polyphosphates.</title>
        <authorList>
            <person name="Steger D.J."/>
            <person name="Haswell E.S."/>
            <person name="Miller A.L."/>
            <person name="Wente S.R."/>
            <person name="O'Shea E.K."/>
        </authorList>
    </citation>
    <scope>REGULATION OF THE INO80 COMPLEX BY INOSITOL POLYPHOSPHATES</scope>
</reference>
<reference key="12">
    <citation type="journal article" date="2004" name="Cell">
        <title>INO80 and gamma-H2AX interaction links ATP-dependent chromatin remodeling to DNA damage repair.</title>
        <authorList>
            <person name="Morrison A.J."/>
            <person name="Highland J."/>
            <person name="Krogan N.J."/>
            <person name="Arbel-Eden A."/>
            <person name="Greenblatt J.F."/>
            <person name="Haber J.E."/>
            <person name="Shen X."/>
        </authorList>
    </citation>
    <scope>FUNCTION OF THE INO80 COMPLEX</scope>
</reference>
<reference key="13">
    <citation type="journal article" date="2004" name="Cell">
        <title>Recruitment of the INO80 complex by H2A phosphorylation links ATP-dependent chromatin remodeling with DNA double-strand break repair.</title>
        <authorList>
            <person name="van Attikum H."/>
            <person name="Fritsch O."/>
            <person name="Hohn B."/>
            <person name="Gasser S.M."/>
        </authorList>
    </citation>
    <scope>FUNCTION OF THE INO80 COMPLEX</scope>
</reference>
<reference key="14">
    <citation type="journal article" date="2007" name="J. Proteome Res.">
        <title>Large-scale phosphorylation analysis of alpha-factor-arrested Saccharomyces cerevisiae.</title>
        <authorList>
            <person name="Li X."/>
            <person name="Gerber S.A."/>
            <person name="Rudner A.D."/>
            <person name="Beausoleil S.A."/>
            <person name="Haas W."/>
            <person name="Villen J."/>
            <person name="Elias J.E."/>
            <person name="Gygi S.P."/>
        </authorList>
    </citation>
    <scope>PHOSPHORYLATION [LARGE SCALE ANALYSIS] AT SER-65</scope>
    <scope>IDENTIFICATION BY MASS SPECTROMETRY [LARGE SCALE ANALYSIS]</scope>
    <source>
        <strain>ADR376</strain>
    </source>
</reference>
<reference key="15">
    <citation type="journal article" date="2008" name="Mol. Cell. Proteomics">
        <title>A multidimensional chromatography technology for in-depth phosphoproteome analysis.</title>
        <authorList>
            <person name="Albuquerque C.P."/>
            <person name="Smolka M.B."/>
            <person name="Payne S.H."/>
            <person name="Bafna V."/>
            <person name="Eng J."/>
            <person name="Zhou H."/>
        </authorList>
    </citation>
    <scope>PHOSPHORYLATION [LARGE SCALE ANALYSIS] AT SER-65; SER-115 AND SER-133</scope>
    <scope>IDENTIFICATION BY MASS SPECTROMETRY [LARGE SCALE ANALYSIS]</scope>
</reference>
<reference key="16">
    <citation type="journal article" date="2009" name="Science">
        <title>Global analysis of Cdk1 substrate phosphorylation sites provides insights into evolution.</title>
        <authorList>
            <person name="Holt L.J."/>
            <person name="Tuch B.B."/>
            <person name="Villen J."/>
            <person name="Johnson A.D."/>
            <person name="Gygi S.P."/>
            <person name="Morgan D.O."/>
        </authorList>
    </citation>
    <scope>PHOSPHORYLATION [LARGE SCALE ANALYSIS] AT SER-65; SER-133 AND SER-610</scope>
    <scope>IDENTIFICATION BY MASS SPECTROMETRY [LARGE SCALE ANALYSIS]</scope>
</reference>
<organism>
    <name type="scientific">Saccharomyces cerevisiae (strain ATCC 204508 / S288c)</name>
    <name type="common">Baker's yeast</name>
    <dbReference type="NCBI Taxonomy" id="559292"/>
    <lineage>
        <taxon>Eukaryota</taxon>
        <taxon>Fungi</taxon>
        <taxon>Dikarya</taxon>
        <taxon>Ascomycota</taxon>
        <taxon>Saccharomycotina</taxon>
        <taxon>Saccharomycetes</taxon>
        <taxon>Saccharomycetales</taxon>
        <taxon>Saccharomycetaceae</taxon>
        <taxon>Saccharomyces</taxon>
    </lineage>
</organism>
<accession>P53115</accession>
<accession>D6VU00</accession>
<comment type="function">
    <text evidence="6 7 8 11 12">ATPase component of the INO80 complex which remodels chromatin by shifting nucleosomes and is involved in DNA repair (PubMed:10952318, PubMed:12887900). Its ability to induce transcription of some phosphate-responsive genes is modulated by inositol polyphosphates (PubMed:10361278, PubMed:10952318). The INO80 complex is involved in DNA repair by associating with 'Ser-129' phosphorylated H2A histones as a response to DNA damage (PubMed:15607974, PubMed:15607975).</text>
</comment>
<comment type="catalytic activity">
    <reaction evidence="7">
        <text>ATP + H2O = ADP + phosphate + H(+)</text>
        <dbReference type="Rhea" id="RHEA:13065"/>
        <dbReference type="ChEBI" id="CHEBI:15377"/>
        <dbReference type="ChEBI" id="CHEBI:15378"/>
        <dbReference type="ChEBI" id="CHEBI:30616"/>
        <dbReference type="ChEBI" id="CHEBI:43474"/>
        <dbReference type="ChEBI" id="CHEBI:456216"/>
    </reaction>
</comment>
<comment type="subunit">
    <text evidence="6 7">Component of the chromatin-remodeling INO80 complex, at least composed of ARP4, ARP5, ARP8, RVB1, RVB2, TAF14, NHP10, IES1, IES3, IES4, IES6, ACT1, IES2, IES5 and INO80.</text>
</comment>
<comment type="interaction">
    <interactant intactId="EBI-24019">
        <id>P53115</id>
    </interactant>
    <interactant intactId="EBI-12010">
        <id>Q03435</id>
        <label>NHP10</label>
    </interactant>
    <organismsDiffer>false</organismsDiffer>
    <experiments>11</experiments>
</comment>
<comment type="subcellular location">
    <subcellularLocation>
        <location evidence="4 9">Nucleus</location>
    </subcellularLocation>
</comment>
<comment type="domain">
    <text evidence="1">The DBINO region is involved in binding to DNA.</text>
</comment>
<comment type="miscellaneous">
    <text evidence="10">Present with 1110 molecules/cell in log phase SD medium.</text>
</comment>
<comment type="similarity">
    <text evidence="13">Belongs to the SNF2/RAD54 helicase family.</text>
</comment>
<name>INO80_YEAST</name>
<evidence type="ECO:0000250" key="1">
    <source>
        <dbReference type="UniProtKB" id="Q9ULG1"/>
    </source>
</evidence>
<evidence type="ECO:0000255" key="2">
    <source>
        <dbReference type="PROSITE-ProRule" id="PRU00541"/>
    </source>
</evidence>
<evidence type="ECO:0000255" key="3">
    <source>
        <dbReference type="PROSITE-ProRule" id="PRU00542"/>
    </source>
</evidence>
<evidence type="ECO:0000255" key="4">
    <source>
        <dbReference type="PROSITE-ProRule" id="PRU00746"/>
    </source>
</evidence>
<evidence type="ECO:0000256" key="5">
    <source>
        <dbReference type="SAM" id="MobiDB-lite"/>
    </source>
</evidence>
<evidence type="ECO:0000269" key="6">
    <source>
    </source>
</evidence>
<evidence type="ECO:0000269" key="7">
    <source>
    </source>
</evidence>
<evidence type="ECO:0000269" key="8">
    <source>
    </source>
</evidence>
<evidence type="ECO:0000269" key="9">
    <source>
    </source>
</evidence>
<evidence type="ECO:0000269" key="10">
    <source>
    </source>
</evidence>
<evidence type="ECO:0000269" key="11">
    <source>
    </source>
</evidence>
<evidence type="ECO:0000269" key="12">
    <source>
    </source>
</evidence>
<evidence type="ECO:0000305" key="13"/>
<evidence type="ECO:0007744" key="14">
    <source>
    </source>
</evidence>
<evidence type="ECO:0007744" key="15">
    <source>
    </source>
</evidence>
<evidence type="ECO:0007744" key="16">
    <source>
    </source>
</evidence>
<evidence type="ECO:0007829" key="17">
    <source>
        <dbReference type="PDB" id="8A5A"/>
    </source>
</evidence>
<evidence type="ECO:0007829" key="18">
    <source>
        <dbReference type="PDB" id="8A5O"/>
    </source>
</evidence>
<proteinExistence type="evidence at protein level"/>
<sequence length="1489" mass="171455">MSLAVLLNKEDKDISDFSKTTAGKSAKKNSRERVADVAPTRVLDKKQAYLSQLNSEFNRIKRRDSIEQLYQDWKFINLQEFELISEWNQQSKDWQFDNTNDSQDLHFKKLYRDMSMINKEWAEYQSFKNANLSDIINEKDADEDEEDDEDELEDGEEDMEEDEASTGRHTNGKSMRGNGIQKSRKKDAAAAAAIGKAIKDDQTHADTVVTVNGDENEDGNNGEDEDNDNDNENNNDNDNDNENENDNDSDNDDEEENGEEDEEEEEIEDLDEEDFAAFEEQDDNDDEDFNPDVEKRRKRSSSSSSSTKLSMNSLSLITSKKINKNITINSDRPKIVRELIKMCNKNKHQKIKKRRFTNCIVTDYNPIDSKLNIKITLKQYHVKRLKKLINDAKREREREEALKNNVGLDGNDLDNDEDGSESHKRRKLNNNTANGADDANKRKFNTRHGLPTYGMKMNAKEARAIQRHYDNTYTTIWKDMARKDSTKMSRLVQQIQSIRSTNFRKTSSLCAREAKKWQSKNFKQIKDFQTRARRGIREMSNFWKKNEREERDLKKKIEKEAMEQAKKEEEEKESKRQAKKLNFLLTQTELYSHFIGRKIKTNELEGNNVSSNDSESQKNIDISALAPNKNDFHAIDFDNENDEQLRLRAAENASNALAETRAKAKQFDDHANAHEEEEEEDELNFQNPTSLGEITIEQPKILACTLKEYQLKGLNWLANLYDQGINGILADEMGLGKTVQSISVLAHLAENHNIWGPFLVVTPASTLHNWVNEISKFLPQFKILPYWGNANDRKVLRKFWDRKNLRYNKNAPFHVMVTSYQMVVTDANYLQKMKWQYMILDEAQAIKSSQSSRWKNLLSFHCRNRLLLTGTPIQNSMQELWALLHFIMPSLFDSHDEFNEWFSKDIESHAEANTKLNQQQLRRLHMILKPFMLRRVKKNVQSELGDKIEIDVLCDLTQRQAKLYQVLKSQISTNYDAIENAATNDSTSNSASNSGSDQNLINAVMQFRKVCNHPDLFERADVDSPFSFTTFGKTTSMLTASVANNNSSVISNSNMNLSSMSSNNISNGKFTDLIYSSRNPIKYSLPRLIYEDLILPNYNNDVDIANKLKNVKFNIFNPSTNYELCLFLSKLTGEPSLNEFFRVSTTPLLKRVIERTNGPKNTDSLSFKTITQELLEVTRNAPSEGVMASLLNVEKHAYEREYLNCIQRGYHPNVSAPPVTIEVLGSSHVTNSINNELFDPLISQALSDIPAITQYNMHVKKGIPVEDFPKTGLFPEPLNKNFSSNISMPSMDRFITESAKLRKLDELLVKLKSEGHRVLIYFQMTKMMDLMEEYLTYRQYNHIRLDGSSKLEDRRDLVHDWQTNPEIFVFLLSTRAGGLGINLTAADTVIFYDSDWNPTIDSQAMDRAHRLGQTRQVTVYRLLVRGTIEERMRDRAKQKEQVQQVVMEGKTQEKNIKTIEVGENDSEVTREGSKSISQDGIKEAASALA</sequence>
<gene>
    <name type="primary">INO80</name>
    <name type="ordered locus">YGL150C</name>
    <name type="ORF">G1880</name>
</gene>
<protein>
    <recommendedName>
        <fullName evidence="13">Chromatin-remodeling ATPase INO80</fullName>
        <ecNumber evidence="7">3.6.4.-</ecNumber>
    </recommendedName>
    <alternativeName>
        <fullName>Inositol-requiring protein 80</fullName>
    </alternativeName>
</protein>
<dbReference type="EC" id="3.6.4.-" evidence="7"/>
<dbReference type="EMBL" id="Z48618">
    <property type="protein sequence ID" value="CAA88537.1"/>
    <property type="molecule type" value="Genomic_DNA"/>
</dbReference>
<dbReference type="EMBL" id="X99960">
    <property type="protein sequence ID" value="CAA68224.1"/>
    <property type="molecule type" value="Genomic_DNA"/>
</dbReference>
<dbReference type="EMBL" id="Z72672">
    <property type="protein sequence ID" value="CAA96861.1"/>
    <property type="molecule type" value="Genomic_DNA"/>
</dbReference>
<dbReference type="EMBL" id="BK006941">
    <property type="protein sequence ID" value="DAA07961.1"/>
    <property type="molecule type" value="Genomic_DNA"/>
</dbReference>
<dbReference type="PIR" id="S60416">
    <property type="entry name" value="S60416"/>
</dbReference>
<dbReference type="RefSeq" id="NP_011365.1">
    <property type="nucleotide sequence ID" value="NM_001181015.1"/>
</dbReference>
<dbReference type="PDB" id="5NBN">
    <property type="method" value="X-ray"/>
    <property type="resolution" value="4.00 A"/>
    <property type="chains" value="G/H=462-598"/>
</dbReference>
<dbReference type="PDB" id="8A5A">
    <property type="method" value="EM"/>
    <property type="resolution" value="3.30 A"/>
    <property type="chains" value="G=1-598"/>
</dbReference>
<dbReference type="PDB" id="8A5O">
    <property type="method" value="EM"/>
    <property type="resolution" value="3.20 A"/>
    <property type="chains" value="G=1-598"/>
</dbReference>
<dbReference type="PDB" id="8ETS">
    <property type="method" value="EM"/>
    <property type="resolution" value="3.04 A"/>
    <property type="chains" value="Q=948-1432"/>
</dbReference>
<dbReference type="PDB" id="8ETU">
    <property type="method" value="EM"/>
    <property type="resolution" value="2.80 A"/>
    <property type="chains" value="Q=948-1432"/>
</dbReference>
<dbReference type="PDB" id="8ETW">
    <property type="method" value="EM"/>
    <property type="resolution" value="2.64 A"/>
    <property type="chains" value="Q=948-1432"/>
</dbReference>
<dbReference type="PDB" id="8EU9">
    <property type="method" value="EM"/>
    <property type="resolution" value="3.48 A"/>
    <property type="chains" value="Q=948-1440"/>
</dbReference>
<dbReference type="PDB" id="8EUF">
    <property type="method" value="EM"/>
    <property type="resolution" value="3.41 A"/>
    <property type="chains" value="Q=1-1489"/>
</dbReference>
<dbReference type="PDBsum" id="5NBN"/>
<dbReference type="PDBsum" id="8A5A"/>
<dbReference type="PDBsum" id="8A5O"/>
<dbReference type="PDBsum" id="8ETS"/>
<dbReference type="PDBsum" id="8ETU"/>
<dbReference type="PDBsum" id="8ETW"/>
<dbReference type="PDBsum" id="8EU9"/>
<dbReference type="PDBsum" id="8EUF"/>
<dbReference type="EMDB" id="EMD-15163"/>
<dbReference type="EMDB" id="EMD-15177"/>
<dbReference type="EMDB" id="EMD-15179"/>
<dbReference type="EMDB" id="EMD-15186"/>
<dbReference type="EMDB" id="EMD-28597"/>
<dbReference type="EMDB" id="EMD-28599"/>
<dbReference type="EMDB" id="EMD-28601"/>
<dbReference type="EMDB" id="EMD-28609"/>
<dbReference type="EMDB" id="EMD-28613"/>
<dbReference type="SMR" id="P53115"/>
<dbReference type="BioGRID" id="33103">
    <property type="interactions" value="303"/>
</dbReference>
<dbReference type="ComplexPortal" id="CPX-863">
    <property type="entry name" value="INO80 chromatin remodeling complex"/>
</dbReference>
<dbReference type="DIP" id="DIP-1386N"/>
<dbReference type="FunCoup" id="P53115">
    <property type="interactions" value="1361"/>
</dbReference>
<dbReference type="IntAct" id="P53115">
    <property type="interactions" value="53"/>
</dbReference>
<dbReference type="MINT" id="P53115"/>
<dbReference type="STRING" id="4932.YGL150C"/>
<dbReference type="GlyGen" id="P53115">
    <property type="glycosylation" value="2 sites, 1 O-linked glycan (2 sites)"/>
</dbReference>
<dbReference type="iPTMnet" id="P53115"/>
<dbReference type="PaxDb" id="4932-YGL150C"/>
<dbReference type="PeptideAtlas" id="P53115"/>
<dbReference type="EnsemblFungi" id="YGL150C_mRNA">
    <property type="protein sequence ID" value="YGL150C"/>
    <property type="gene ID" value="YGL150C"/>
</dbReference>
<dbReference type="GeneID" id="852728"/>
<dbReference type="KEGG" id="sce:YGL150C"/>
<dbReference type="AGR" id="SGD:S000003118"/>
<dbReference type="SGD" id="S000003118">
    <property type="gene designation" value="INO80"/>
</dbReference>
<dbReference type="VEuPathDB" id="FungiDB:YGL150C"/>
<dbReference type="eggNOG" id="KOG0388">
    <property type="taxonomic scope" value="Eukaryota"/>
</dbReference>
<dbReference type="GeneTree" id="ENSGT00900000141110"/>
<dbReference type="HOGENOM" id="CLU_000315_26_2_1"/>
<dbReference type="InParanoid" id="P53115"/>
<dbReference type="OMA" id="FWKKNER"/>
<dbReference type="OrthoDB" id="372624at2759"/>
<dbReference type="BioCyc" id="YEAST:G3O-30642-MONOMER"/>
<dbReference type="BioGRID-ORCS" id="852728">
    <property type="hits" value="3 hits in 10 CRISPR screens"/>
</dbReference>
<dbReference type="PRO" id="PR:P53115"/>
<dbReference type="Proteomes" id="UP000002311">
    <property type="component" value="Chromosome VII"/>
</dbReference>
<dbReference type="RNAct" id="P53115">
    <property type="molecule type" value="protein"/>
</dbReference>
<dbReference type="GO" id="GO:0000775">
    <property type="term" value="C:chromosome, centromeric region"/>
    <property type="evidence" value="ECO:0000315"/>
    <property type="project" value="SGD"/>
</dbReference>
<dbReference type="GO" id="GO:0000781">
    <property type="term" value="C:chromosome, telomeric region"/>
    <property type="evidence" value="ECO:0007669"/>
    <property type="project" value="GOC"/>
</dbReference>
<dbReference type="GO" id="GO:0031011">
    <property type="term" value="C:Ino80 complex"/>
    <property type="evidence" value="ECO:0000314"/>
    <property type="project" value="SGD"/>
</dbReference>
<dbReference type="GO" id="GO:0005634">
    <property type="term" value="C:nucleus"/>
    <property type="evidence" value="ECO:0000314"/>
    <property type="project" value="ComplexPortal"/>
</dbReference>
<dbReference type="GO" id="GO:0005524">
    <property type="term" value="F:ATP binding"/>
    <property type="evidence" value="ECO:0007669"/>
    <property type="project" value="UniProtKB-KW"/>
</dbReference>
<dbReference type="GO" id="GO:0016887">
    <property type="term" value="F:ATP hydrolysis activity"/>
    <property type="evidence" value="ECO:0000314"/>
    <property type="project" value="SGD"/>
</dbReference>
<dbReference type="GO" id="GO:0140658">
    <property type="term" value="F:ATP-dependent chromatin remodeler activity"/>
    <property type="evidence" value="ECO:0007669"/>
    <property type="project" value="InterPro"/>
</dbReference>
<dbReference type="GO" id="GO:0003677">
    <property type="term" value="F:DNA binding"/>
    <property type="evidence" value="ECO:0007669"/>
    <property type="project" value="UniProtKB-KW"/>
</dbReference>
<dbReference type="GO" id="GO:0042393">
    <property type="term" value="F:histone binding"/>
    <property type="evidence" value="ECO:0000318"/>
    <property type="project" value="GO_Central"/>
</dbReference>
<dbReference type="GO" id="GO:0033554">
    <property type="term" value="P:cellular response to stress"/>
    <property type="evidence" value="ECO:0000315"/>
    <property type="project" value="SGD"/>
</dbReference>
<dbReference type="GO" id="GO:0006338">
    <property type="term" value="P:chromatin remodeling"/>
    <property type="evidence" value="ECO:0000314"/>
    <property type="project" value="GO_Central"/>
</dbReference>
<dbReference type="GO" id="GO:0006281">
    <property type="term" value="P:DNA repair"/>
    <property type="evidence" value="ECO:0000314"/>
    <property type="project" value="SGD"/>
</dbReference>
<dbReference type="GO" id="GO:0045944">
    <property type="term" value="P:positive regulation of transcription by RNA polymerase II"/>
    <property type="evidence" value="ECO:0000315"/>
    <property type="project" value="SGD"/>
</dbReference>
<dbReference type="GO" id="GO:0006355">
    <property type="term" value="P:regulation of DNA-templated transcription"/>
    <property type="evidence" value="ECO:0000303"/>
    <property type="project" value="ComplexPortal"/>
</dbReference>
<dbReference type="GO" id="GO:0019222">
    <property type="term" value="P:regulation of metabolic process"/>
    <property type="evidence" value="ECO:0000314"/>
    <property type="project" value="SGD"/>
</dbReference>
<dbReference type="GO" id="GO:0032006">
    <property type="term" value="P:regulation of TOR signaling"/>
    <property type="evidence" value="ECO:0000315"/>
    <property type="project" value="SGD"/>
</dbReference>
<dbReference type="GO" id="GO:0006357">
    <property type="term" value="P:regulation of transcription by RNA polymerase II"/>
    <property type="evidence" value="ECO:0000315"/>
    <property type="project" value="SGD"/>
</dbReference>
<dbReference type="GO" id="GO:0031509">
    <property type="term" value="P:subtelomeric heterochromatin formation"/>
    <property type="evidence" value="ECO:0000315"/>
    <property type="project" value="SGD"/>
</dbReference>
<dbReference type="GO" id="GO:0000722">
    <property type="term" value="P:telomere maintenance via recombination"/>
    <property type="evidence" value="ECO:0000316"/>
    <property type="project" value="SGD"/>
</dbReference>
<dbReference type="GO" id="GO:0006366">
    <property type="term" value="P:transcription by RNA polymerase II"/>
    <property type="evidence" value="ECO:0000314"/>
    <property type="project" value="SGD"/>
</dbReference>
<dbReference type="CDD" id="cd18002">
    <property type="entry name" value="DEXQc_INO80"/>
    <property type="match status" value="1"/>
</dbReference>
<dbReference type="CDD" id="cd18793">
    <property type="entry name" value="SF2_C_SNF"/>
    <property type="match status" value="1"/>
</dbReference>
<dbReference type="FunFam" id="3.40.50.10810:FF:000022">
    <property type="entry name" value="Blast:Putative DNA helicase Ino80"/>
    <property type="match status" value="1"/>
</dbReference>
<dbReference type="FunFam" id="3.40.50.300:FF:001445">
    <property type="entry name" value="Chromatin-remodeling ATPase INO80"/>
    <property type="match status" value="1"/>
</dbReference>
<dbReference type="FunFam" id="3.40.50.300:FF:001269">
    <property type="entry name" value="SNF2 family helicase/ATPase"/>
    <property type="match status" value="1"/>
</dbReference>
<dbReference type="Gene3D" id="3.40.50.300">
    <property type="entry name" value="P-loop containing nucleotide triphosphate hydrolases"/>
    <property type="match status" value="2"/>
</dbReference>
<dbReference type="Gene3D" id="3.40.50.10810">
    <property type="entry name" value="Tandem AAA-ATPase domain"/>
    <property type="match status" value="1"/>
</dbReference>
<dbReference type="InterPro" id="IPR020838">
    <property type="entry name" value="DBINO"/>
</dbReference>
<dbReference type="InterPro" id="IPR031047">
    <property type="entry name" value="DEXQc_INO80"/>
</dbReference>
<dbReference type="InterPro" id="IPR014001">
    <property type="entry name" value="Helicase_ATP-bd"/>
</dbReference>
<dbReference type="InterPro" id="IPR001650">
    <property type="entry name" value="Helicase_C-like"/>
</dbReference>
<dbReference type="InterPro" id="IPR050520">
    <property type="entry name" value="INO80/SWR1_helicase"/>
</dbReference>
<dbReference type="InterPro" id="IPR027417">
    <property type="entry name" value="P-loop_NTPase"/>
</dbReference>
<dbReference type="InterPro" id="IPR038718">
    <property type="entry name" value="SNF2-like_sf"/>
</dbReference>
<dbReference type="InterPro" id="IPR049730">
    <property type="entry name" value="SNF2/RAD54-like_C"/>
</dbReference>
<dbReference type="InterPro" id="IPR000330">
    <property type="entry name" value="SNF2_N"/>
</dbReference>
<dbReference type="PANTHER" id="PTHR45685:SF2">
    <property type="entry name" value="CHROMATIN-REMODELING ATPASE INO80"/>
    <property type="match status" value="1"/>
</dbReference>
<dbReference type="PANTHER" id="PTHR45685">
    <property type="entry name" value="HELICASE SRCAP-RELATED"/>
    <property type="match status" value="1"/>
</dbReference>
<dbReference type="Pfam" id="PF13892">
    <property type="entry name" value="DBINO"/>
    <property type="match status" value="1"/>
</dbReference>
<dbReference type="Pfam" id="PF00271">
    <property type="entry name" value="Helicase_C"/>
    <property type="match status" value="1"/>
</dbReference>
<dbReference type="Pfam" id="PF00176">
    <property type="entry name" value="SNF2-rel_dom"/>
    <property type="match status" value="1"/>
</dbReference>
<dbReference type="SMART" id="SM00487">
    <property type="entry name" value="DEXDc"/>
    <property type="match status" value="1"/>
</dbReference>
<dbReference type="SMART" id="SM00490">
    <property type="entry name" value="HELICc"/>
    <property type="match status" value="1"/>
</dbReference>
<dbReference type="SUPFAM" id="SSF52540">
    <property type="entry name" value="P-loop containing nucleoside triphosphate hydrolases"/>
    <property type="match status" value="2"/>
</dbReference>
<dbReference type="PROSITE" id="PS51413">
    <property type="entry name" value="DBINO"/>
    <property type="match status" value="1"/>
</dbReference>
<dbReference type="PROSITE" id="PS51192">
    <property type="entry name" value="HELICASE_ATP_BIND_1"/>
    <property type="match status" value="1"/>
</dbReference>
<dbReference type="PROSITE" id="PS51194">
    <property type="entry name" value="HELICASE_CTER"/>
    <property type="match status" value="1"/>
</dbReference>